<proteinExistence type="inferred from homology"/>
<evidence type="ECO:0000250" key="1"/>
<evidence type="ECO:0000255" key="2"/>
<evidence type="ECO:0000305" key="3"/>
<keyword id="KW-0997">Cell inner membrane</keyword>
<keyword id="KW-1003">Cell membrane</keyword>
<keyword id="KW-0472">Membrane</keyword>
<keyword id="KW-1185">Reference proteome</keyword>
<keyword id="KW-0812">Transmembrane</keyword>
<keyword id="KW-1133">Transmembrane helix</keyword>
<accession>Q8ZLK7</accession>
<comment type="subcellular location">
    <subcellularLocation>
        <location evidence="1">Cell inner membrane</location>
        <topology evidence="1">Multi-pass membrane protein</topology>
    </subcellularLocation>
</comment>
<comment type="similarity">
    <text evidence="3">Belongs to the major facilitator superfamily. TsgA family.</text>
</comment>
<dbReference type="EMBL" id="AE006468">
    <property type="protein sequence ID" value="AAL22335.1"/>
    <property type="molecule type" value="Genomic_DNA"/>
</dbReference>
<dbReference type="RefSeq" id="WP_000185211.1">
    <property type="nucleotide sequence ID" value="NC_003197.2"/>
</dbReference>
<dbReference type="SMR" id="Q8ZLK7"/>
<dbReference type="STRING" id="99287.STM3473"/>
<dbReference type="PaxDb" id="99287-STM3473"/>
<dbReference type="KEGG" id="stm:STM3473"/>
<dbReference type="PATRIC" id="fig|99287.12.peg.3670"/>
<dbReference type="HOGENOM" id="CLU_056916_0_0_6"/>
<dbReference type="OMA" id="FIVTGPI"/>
<dbReference type="PhylomeDB" id="Q8ZLK7"/>
<dbReference type="BioCyc" id="SENT99287:STM3473-MONOMER"/>
<dbReference type="Proteomes" id="UP000001014">
    <property type="component" value="Chromosome"/>
</dbReference>
<dbReference type="GO" id="GO:0005886">
    <property type="term" value="C:plasma membrane"/>
    <property type="evidence" value="ECO:0007669"/>
    <property type="project" value="UniProtKB-SubCell"/>
</dbReference>
<dbReference type="GO" id="GO:0022857">
    <property type="term" value="F:transmembrane transporter activity"/>
    <property type="evidence" value="ECO:0007669"/>
    <property type="project" value="InterPro"/>
</dbReference>
<dbReference type="FunFam" id="1.20.1250.20:FF:000032">
    <property type="entry name" value="Protein TsgA"/>
    <property type="match status" value="1"/>
</dbReference>
<dbReference type="FunFam" id="1.20.1250.20:FF:000052">
    <property type="entry name" value="Protein TsgA"/>
    <property type="match status" value="1"/>
</dbReference>
<dbReference type="Gene3D" id="1.20.1250.20">
    <property type="entry name" value="MFS general substrate transporter like domains"/>
    <property type="match status" value="2"/>
</dbReference>
<dbReference type="HAMAP" id="MF_01044">
    <property type="entry name" value="MFS_TsgA"/>
    <property type="match status" value="1"/>
</dbReference>
<dbReference type="InterPro" id="IPR011701">
    <property type="entry name" value="MFS"/>
</dbReference>
<dbReference type="InterPro" id="IPR020846">
    <property type="entry name" value="MFS_dom"/>
</dbReference>
<dbReference type="InterPro" id="IPR036259">
    <property type="entry name" value="MFS_trans_sf"/>
</dbReference>
<dbReference type="InterPro" id="IPR023528">
    <property type="entry name" value="MFS_TsgA"/>
</dbReference>
<dbReference type="InterPro" id="IPR050375">
    <property type="entry name" value="MFS_TsgA-like"/>
</dbReference>
<dbReference type="NCBIfam" id="NF002982">
    <property type="entry name" value="PRK03699.1"/>
    <property type="match status" value="1"/>
</dbReference>
<dbReference type="PANTHER" id="PTHR43702">
    <property type="entry name" value="L-FUCOSE-PROTON SYMPORTER"/>
    <property type="match status" value="1"/>
</dbReference>
<dbReference type="PANTHER" id="PTHR43702:SF3">
    <property type="entry name" value="PROTEIN TSGA"/>
    <property type="match status" value="1"/>
</dbReference>
<dbReference type="Pfam" id="PF07690">
    <property type="entry name" value="MFS_1"/>
    <property type="match status" value="1"/>
</dbReference>
<dbReference type="SUPFAM" id="SSF103473">
    <property type="entry name" value="MFS general substrate transporter"/>
    <property type="match status" value="1"/>
</dbReference>
<dbReference type="PROSITE" id="PS50850">
    <property type="entry name" value="MFS"/>
    <property type="match status" value="1"/>
</dbReference>
<feature type="chain" id="PRO_0000206500" description="Protein TsgA">
    <location>
        <begin position="1"/>
        <end position="393"/>
    </location>
</feature>
<feature type="topological domain" description="Cytoplasmic" evidence="2">
    <location>
        <begin position="1"/>
        <end position="10"/>
    </location>
</feature>
<feature type="transmembrane region" description="Helical" evidence="2">
    <location>
        <begin position="11"/>
        <end position="31"/>
    </location>
</feature>
<feature type="topological domain" description="Periplasmic" evidence="2">
    <location>
        <begin position="32"/>
        <end position="50"/>
    </location>
</feature>
<feature type="transmembrane region" description="Helical" evidence="2">
    <location>
        <begin position="51"/>
        <end position="71"/>
    </location>
</feature>
<feature type="topological domain" description="Cytoplasmic" evidence="2">
    <location>
        <begin position="72"/>
        <end position="77"/>
    </location>
</feature>
<feature type="transmembrane region" description="Helical" evidence="2">
    <location>
        <begin position="78"/>
        <end position="98"/>
    </location>
</feature>
<feature type="topological domain" description="Periplasmic" evidence="2">
    <location>
        <begin position="99"/>
        <end position="100"/>
    </location>
</feature>
<feature type="transmembrane region" description="Helical" evidence="2">
    <location>
        <begin position="101"/>
        <end position="121"/>
    </location>
</feature>
<feature type="topological domain" description="Cytoplasmic" evidence="2">
    <location>
        <begin position="122"/>
        <end position="133"/>
    </location>
</feature>
<feature type="transmembrane region" description="Helical" evidence="2">
    <location>
        <begin position="134"/>
        <end position="154"/>
    </location>
</feature>
<feature type="topological domain" description="Periplasmic" evidence="2">
    <location>
        <begin position="155"/>
        <end position="161"/>
    </location>
</feature>
<feature type="transmembrane region" description="Helical" evidence="2">
    <location>
        <begin position="162"/>
        <end position="182"/>
    </location>
</feature>
<feature type="topological domain" description="Cytoplasmic" evidence="2">
    <location>
        <begin position="183"/>
        <end position="205"/>
    </location>
</feature>
<feature type="transmembrane region" description="Helical" evidence="2">
    <location>
        <begin position="206"/>
        <end position="226"/>
    </location>
</feature>
<feature type="topological domain" description="Periplasmic" evidence="2">
    <location>
        <begin position="227"/>
        <end position="244"/>
    </location>
</feature>
<feature type="transmembrane region" description="Helical" evidence="2">
    <location>
        <begin position="245"/>
        <end position="265"/>
    </location>
</feature>
<feature type="topological domain" description="Cytoplasmic" evidence="2">
    <location>
        <begin position="266"/>
        <end position="272"/>
    </location>
</feature>
<feature type="transmembrane region" description="Helical" evidence="2">
    <location>
        <begin position="273"/>
        <end position="293"/>
    </location>
</feature>
<feature type="topological domain" description="Periplasmic" evidence="2">
    <location>
        <begin position="294"/>
        <end position="297"/>
    </location>
</feature>
<feature type="transmembrane region" description="Helical" evidence="2">
    <location>
        <begin position="298"/>
        <end position="318"/>
    </location>
</feature>
<feature type="topological domain" description="Cytoplasmic" evidence="2">
    <location>
        <begin position="319"/>
        <end position="331"/>
    </location>
</feature>
<feature type="transmembrane region" description="Helical" evidence="2">
    <location>
        <begin position="332"/>
        <end position="352"/>
    </location>
</feature>
<feature type="topological domain" description="Periplasmic" evidence="2">
    <location>
        <begin position="353"/>
        <end position="360"/>
    </location>
</feature>
<feature type="transmembrane region" description="Helical" evidence="2">
    <location>
        <begin position="361"/>
        <end position="381"/>
    </location>
</feature>
<feature type="topological domain" description="Cytoplasmic" evidence="2">
    <location>
        <begin position="382"/>
        <end position="393"/>
    </location>
</feature>
<organism>
    <name type="scientific">Salmonella typhimurium (strain LT2 / SGSC1412 / ATCC 700720)</name>
    <dbReference type="NCBI Taxonomy" id="99287"/>
    <lineage>
        <taxon>Bacteria</taxon>
        <taxon>Pseudomonadati</taxon>
        <taxon>Pseudomonadota</taxon>
        <taxon>Gammaproteobacteria</taxon>
        <taxon>Enterobacterales</taxon>
        <taxon>Enterobacteriaceae</taxon>
        <taxon>Salmonella</taxon>
    </lineage>
</organism>
<reference key="1">
    <citation type="journal article" date="2001" name="Nature">
        <title>Complete genome sequence of Salmonella enterica serovar Typhimurium LT2.</title>
        <authorList>
            <person name="McClelland M."/>
            <person name="Sanderson K.E."/>
            <person name="Spieth J."/>
            <person name="Clifton S.W."/>
            <person name="Latreille P."/>
            <person name="Courtney L."/>
            <person name="Porwollik S."/>
            <person name="Ali J."/>
            <person name="Dante M."/>
            <person name="Du F."/>
            <person name="Hou S."/>
            <person name="Layman D."/>
            <person name="Leonard S."/>
            <person name="Nguyen C."/>
            <person name="Scott K."/>
            <person name="Holmes A."/>
            <person name="Grewal N."/>
            <person name="Mulvaney E."/>
            <person name="Ryan E."/>
            <person name="Sun H."/>
            <person name="Florea L."/>
            <person name="Miller W."/>
            <person name="Stoneking T."/>
            <person name="Nhan M."/>
            <person name="Waterston R."/>
            <person name="Wilson R.K."/>
        </authorList>
    </citation>
    <scope>NUCLEOTIDE SEQUENCE [LARGE SCALE GENOMIC DNA]</scope>
    <source>
        <strain>LT2 / SGSC1412 / ATCC 700720</strain>
    </source>
</reference>
<sequence>MTNSNRIKLTWISFLSYALTGALVIVTGMVMGNIADYFHLPVSSMSNTFTFLNAGILISIFLNAWLMEIIPLKTQLRFGFILMVLAVAGLMFGHSLALFSAAMFVLGLVSGITMSIGTFLITQLYEGRQRGSRLLFTDSFFSMAGMIFPMVAAFLLARSIEWYWVYACIGLVYLAIFILTFGCEFPALGKHAQHSQAPVVKEKWGIGVLFLAVAALCYILGQLGFISWVPEYAKGLGMSLNDAGALVSDFWMSYMFGMWAFSFILRFFDLQRILTVLAGMAAVLMYLFITGTQAHMPWFILTLGFFSSAIYTSIITLGSQQTKVASPKLVNFILTCGTIGTMLTFVVTGPIVAHSGPQAALLTANGLYAVVFVMCFALGFVSRHRQHSAPATH</sequence>
<gene>
    <name type="primary">tsgA</name>
    <name type="ordered locus">STM3473</name>
</gene>
<name>TSGA_SALTY</name>
<protein>
    <recommendedName>
        <fullName>Protein TsgA</fullName>
    </recommendedName>
</protein>